<protein>
    <recommendedName>
        <fullName evidence="1">Arginine N-succinyltransferase</fullName>
        <shortName evidence="1">AST</shortName>
        <ecNumber evidence="1">2.3.1.109</ecNumber>
    </recommendedName>
    <alternativeName>
        <fullName evidence="1">AOST</fullName>
    </alternativeName>
</protein>
<keyword id="KW-0012">Acyltransferase</keyword>
<keyword id="KW-0056">Arginine metabolism</keyword>
<keyword id="KW-1185">Reference proteome</keyword>
<keyword id="KW-0808">Transferase</keyword>
<dbReference type="EC" id="2.3.1.109" evidence="1"/>
<dbReference type="EMBL" id="CU928145">
    <property type="protein sequence ID" value="CAU97774.1"/>
    <property type="molecule type" value="Genomic_DNA"/>
</dbReference>
<dbReference type="RefSeq" id="WP_000989416.1">
    <property type="nucleotide sequence ID" value="NC_011748.1"/>
</dbReference>
<dbReference type="SMR" id="B7L6M1"/>
<dbReference type="KEGG" id="eck:EC55989_1915"/>
<dbReference type="HOGENOM" id="CLU_057655_0_0_6"/>
<dbReference type="UniPathway" id="UPA00185">
    <property type="reaction ID" value="UER00279"/>
</dbReference>
<dbReference type="Proteomes" id="UP000000746">
    <property type="component" value="Chromosome"/>
</dbReference>
<dbReference type="GO" id="GO:0008791">
    <property type="term" value="F:arginine N-succinyltransferase activity"/>
    <property type="evidence" value="ECO:0007669"/>
    <property type="project" value="UniProtKB-UniRule"/>
</dbReference>
<dbReference type="GO" id="GO:0019544">
    <property type="term" value="P:arginine catabolic process to glutamate"/>
    <property type="evidence" value="ECO:0007669"/>
    <property type="project" value="UniProtKB-UniRule"/>
</dbReference>
<dbReference type="GO" id="GO:0019545">
    <property type="term" value="P:arginine catabolic process to succinate"/>
    <property type="evidence" value="ECO:0007669"/>
    <property type="project" value="UniProtKB-UniRule"/>
</dbReference>
<dbReference type="Gene3D" id="2.40.40.20">
    <property type="match status" value="1"/>
</dbReference>
<dbReference type="Gene3D" id="3.40.630.30">
    <property type="match status" value="1"/>
</dbReference>
<dbReference type="HAMAP" id="MF_01171">
    <property type="entry name" value="AstA"/>
    <property type="match status" value="1"/>
</dbReference>
<dbReference type="InterPro" id="IPR016181">
    <property type="entry name" value="Acyl_CoA_acyltransferase"/>
</dbReference>
<dbReference type="InterPro" id="IPR007041">
    <property type="entry name" value="Arg_succinylTrfase_AstA/AruG"/>
</dbReference>
<dbReference type="InterPro" id="IPR017650">
    <property type="entry name" value="Arginine_N-succinylTrfase"/>
</dbReference>
<dbReference type="NCBIfam" id="TIGR03243">
    <property type="entry name" value="arg_catab_AOST"/>
    <property type="match status" value="1"/>
</dbReference>
<dbReference type="NCBIfam" id="TIGR03244">
    <property type="entry name" value="arg_catab_AstA"/>
    <property type="match status" value="1"/>
</dbReference>
<dbReference type="NCBIfam" id="NF007770">
    <property type="entry name" value="PRK10456.1"/>
    <property type="match status" value="1"/>
</dbReference>
<dbReference type="PANTHER" id="PTHR30420:SF1">
    <property type="entry name" value="ARGININE N-SUCCINYLTRANSFERASE"/>
    <property type="match status" value="1"/>
</dbReference>
<dbReference type="PANTHER" id="PTHR30420">
    <property type="entry name" value="N-SUCCINYLARGININE DIHYDROLASE"/>
    <property type="match status" value="1"/>
</dbReference>
<dbReference type="Pfam" id="PF04958">
    <property type="entry name" value="AstA"/>
    <property type="match status" value="1"/>
</dbReference>
<dbReference type="SUPFAM" id="SSF55729">
    <property type="entry name" value="Acyl-CoA N-acyltransferases (Nat)"/>
    <property type="match status" value="1"/>
</dbReference>
<sequence length="344" mass="38486">MMVIRPVERSDVSALMQLASKTGGGLTSLPANEATLSARIERAIKTWQGELPKSEQGYVFVLEDSETGTVAGICAIEVAVGLNDPWYNYRVGTLVHASKELNVYNALPTLFLSNDHTGSSELCTLFLDPDWRKEGNGYLLSKSRFMFMAAFRDKFNDKVVAEMRGVIDEHGYSPFWQSLGKRFFSMDFSRADFLCGTGQKAFIAELMPKHPIYTHFLSQEAQDVIGQVHPQTAPARAVLEKEGFRYRNYIDIFDGGPTLECDIDRVRAIRKSRLVEVAEGQPAQGDFPACLVANENYHHFRVVLARTDPATERLILTAEQLDALKCHAGDRVRLVRLCAEEKTA</sequence>
<evidence type="ECO:0000255" key="1">
    <source>
        <dbReference type="HAMAP-Rule" id="MF_01171"/>
    </source>
</evidence>
<reference key="1">
    <citation type="journal article" date="2009" name="PLoS Genet.">
        <title>Organised genome dynamics in the Escherichia coli species results in highly diverse adaptive paths.</title>
        <authorList>
            <person name="Touchon M."/>
            <person name="Hoede C."/>
            <person name="Tenaillon O."/>
            <person name="Barbe V."/>
            <person name="Baeriswyl S."/>
            <person name="Bidet P."/>
            <person name="Bingen E."/>
            <person name="Bonacorsi S."/>
            <person name="Bouchier C."/>
            <person name="Bouvet O."/>
            <person name="Calteau A."/>
            <person name="Chiapello H."/>
            <person name="Clermont O."/>
            <person name="Cruveiller S."/>
            <person name="Danchin A."/>
            <person name="Diard M."/>
            <person name="Dossat C."/>
            <person name="Karoui M.E."/>
            <person name="Frapy E."/>
            <person name="Garry L."/>
            <person name="Ghigo J.M."/>
            <person name="Gilles A.M."/>
            <person name="Johnson J."/>
            <person name="Le Bouguenec C."/>
            <person name="Lescat M."/>
            <person name="Mangenot S."/>
            <person name="Martinez-Jehanne V."/>
            <person name="Matic I."/>
            <person name="Nassif X."/>
            <person name="Oztas S."/>
            <person name="Petit M.A."/>
            <person name="Pichon C."/>
            <person name="Rouy Z."/>
            <person name="Ruf C.S."/>
            <person name="Schneider D."/>
            <person name="Tourret J."/>
            <person name="Vacherie B."/>
            <person name="Vallenet D."/>
            <person name="Medigue C."/>
            <person name="Rocha E.P.C."/>
            <person name="Denamur E."/>
        </authorList>
    </citation>
    <scope>NUCLEOTIDE SEQUENCE [LARGE SCALE GENOMIC DNA]</scope>
    <source>
        <strain>55989 / EAEC</strain>
    </source>
</reference>
<organism>
    <name type="scientific">Escherichia coli (strain 55989 / EAEC)</name>
    <dbReference type="NCBI Taxonomy" id="585055"/>
    <lineage>
        <taxon>Bacteria</taxon>
        <taxon>Pseudomonadati</taxon>
        <taxon>Pseudomonadota</taxon>
        <taxon>Gammaproteobacteria</taxon>
        <taxon>Enterobacterales</taxon>
        <taxon>Enterobacteriaceae</taxon>
        <taxon>Escherichia</taxon>
    </lineage>
</organism>
<gene>
    <name evidence="1" type="primary">astA</name>
    <name type="ordered locus">EC55989_1915</name>
</gene>
<proteinExistence type="inferred from homology"/>
<feature type="chain" id="PRO_1000164366" description="Arginine N-succinyltransferase">
    <location>
        <begin position="1"/>
        <end position="344"/>
    </location>
</feature>
<feature type="active site" description="Proton donor" evidence="1">
    <location>
        <position position="229"/>
    </location>
</feature>
<feature type="binding site" evidence="1">
    <location>
        <position position="125"/>
    </location>
    <ligand>
        <name>succinyl-CoA</name>
        <dbReference type="ChEBI" id="CHEBI:57292"/>
    </ligand>
</feature>
<comment type="function">
    <text evidence="1">Catalyzes the transfer of succinyl-CoA to arginine to produce N(2)-succinylarginine.</text>
</comment>
<comment type="catalytic activity">
    <reaction evidence="1">
        <text>succinyl-CoA + L-arginine = N(2)-succinyl-L-arginine + CoA + H(+)</text>
        <dbReference type="Rhea" id="RHEA:15185"/>
        <dbReference type="ChEBI" id="CHEBI:15378"/>
        <dbReference type="ChEBI" id="CHEBI:32682"/>
        <dbReference type="ChEBI" id="CHEBI:57287"/>
        <dbReference type="ChEBI" id="CHEBI:57292"/>
        <dbReference type="ChEBI" id="CHEBI:58241"/>
        <dbReference type="EC" id="2.3.1.109"/>
    </reaction>
</comment>
<comment type="pathway">
    <text evidence="1">Amino-acid degradation; L-arginine degradation via AST pathway; L-glutamate and succinate from L-arginine: step 1/5.</text>
</comment>
<comment type="similarity">
    <text evidence="1">Belongs to the arginine N-succinyltransferase family.</text>
</comment>
<name>ASTA_ECO55</name>
<accession>B7L6M1</accession>